<dbReference type="EC" id="6.3.5.-" evidence="1"/>
<dbReference type="EMBL" id="CP000951">
    <property type="protein sequence ID" value="ACA99556.1"/>
    <property type="molecule type" value="Genomic_DNA"/>
</dbReference>
<dbReference type="RefSeq" id="WP_012307179.1">
    <property type="nucleotide sequence ID" value="NZ_JAHHPU010000002.1"/>
</dbReference>
<dbReference type="SMR" id="B1XNN1"/>
<dbReference type="STRING" id="32049.SYNPCC7002_A1565"/>
<dbReference type="KEGG" id="syp:SYNPCC7002_A1565"/>
<dbReference type="eggNOG" id="COG0721">
    <property type="taxonomic scope" value="Bacteria"/>
</dbReference>
<dbReference type="HOGENOM" id="CLU_105899_2_0_3"/>
<dbReference type="Proteomes" id="UP000001688">
    <property type="component" value="Chromosome"/>
</dbReference>
<dbReference type="GO" id="GO:0050566">
    <property type="term" value="F:asparaginyl-tRNA synthase (glutamine-hydrolyzing) activity"/>
    <property type="evidence" value="ECO:0007669"/>
    <property type="project" value="RHEA"/>
</dbReference>
<dbReference type="GO" id="GO:0005524">
    <property type="term" value="F:ATP binding"/>
    <property type="evidence" value="ECO:0007669"/>
    <property type="project" value="UniProtKB-KW"/>
</dbReference>
<dbReference type="GO" id="GO:0050567">
    <property type="term" value="F:glutaminyl-tRNA synthase (glutamine-hydrolyzing) activity"/>
    <property type="evidence" value="ECO:0007669"/>
    <property type="project" value="UniProtKB-UniRule"/>
</dbReference>
<dbReference type="GO" id="GO:0070681">
    <property type="term" value="P:glutaminyl-tRNAGln biosynthesis via transamidation"/>
    <property type="evidence" value="ECO:0007669"/>
    <property type="project" value="TreeGrafter"/>
</dbReference>
<dbReference type="GO" id="GO:0006450">
    <property type="term" value="P:regulation of translational fidelity"/>
    <property type="evidence" value="ECO:0007669"/>
    <property type="project" value="InterPro"/>
</dbReference>
<dbReference type="GO" id="GO:0006412">
    <property type="term" value="P:translation"/>
    <property type="evidence" value="ECO:0007669"/>
    <property type="project" value="UniProtKB-UniRule"/>
</dbReference>
<dbReference type="Gene3D" id="1.10.20.60">
    <property type="entry name" value="Glu-tRNAGln amidotransferase C subunit, N-terminal domain"/>
    <property type="match status" value="1"/>
</dbReference>
<dbReference type="HAMAP" id="MF_00122">
    <property type="entry name" value="GatC"/>
    <property type="match status" value="1"/>
</dbReference>
<dbReference type="InterPro" id="IPR036113">
    <property type="entry name" value="Asp/Glu-ADT_sf_sub_c"/>
</dbReference>
<dbReference type="InterPro" id="IPR003837">
    <property type="entry name" value="GatC"/>
</dbReference>
<dbReference type="NCBIfam" id="TIGR00135">
    <property type="entry name" value="gatC"/>
    <property type="match status" value="1"/>
</dbReference>
<dbReference type="PANTHER" id="PTHR15004">
    <property type="entry name" value="GLUTAMYL-TRNA(GLN) AMIDOTRANSFERASE SUBUNIT C, MITOCHONDRIAL"/>
    <property type="match status" value="1"/>
</dbReference>
<dbReference type="PANTHER" id="PTHR15004:SF0">
    <property type="entry name" value="GLUTAMYL-TRNA(GLN) AMIDOTRANSFERASE SUBUNIT C, MITOCHONDRIAL"/>
    <property type="match status" value="1"/>
</dbReference>
<dbReference type="Pfam" id="PF02686">
    <property type="entry name" value="GatC"/>
    <property type="match status" value="1"/>
</dbReference>
<dbReference type="SUPFAM" id="SSF141000">
    <property type="entry name" value="Glu-tRNAGln amidotransferase C subunit"/>
    <property type="match status" value="1"/>
</dbReference>
<gene>
    <name evidence="1" type="primary">gatC</name>
    <name type="ordered locus">SYNPCC7002_A1565</name>
</gene>
<evidence type="ECO:0000255" key="1">
    <source>
        <dbReference type="HAMAP-Rule" id="MF_00122"/>
    </source>
</evidence>
<proteinExistence type="inferred from homology"/>
<comment type="function">
    <text evidence="1">Allows the formation of correctly charged Asn-tRNA(Asn) or Gln-tRNA(Gln) through the transamidation of misacylated Asp-tRNA(Asn) or Glu-tRNA(Gln) in organisms which lack either or both of asparaginyl-tRNA or glutaminyl-tRNA synthetases. The reaction takes place in the presence of glutamine and ATP through an activated phospho-Asp-tRNA(Asn) or phospho-Glu-tRNA(Gln).</text>
</comment>
<comment type="catalytic activity">
    <reaction evidence="1">
        <text>L-glutamyl-tRNA(Gln) + L-glutamine + ATP + H2O = L-glutaminyl-tRNA(Gln) + L-glutamate + ADP + phosphate + H(+)</text>
        <dbReference type="Rhea" id="RHEA:17521"/>
        <dbReference type="Rhea" id="RHEA-COMP:9681"/>
        <dbReference type="Rhea" id="RHEA-COMP:9684"/>
        <dbReference type="ChEBI" id="CHEBI:15377"/>
        <dbReference type="ChEBI" id="CHEBI:15378"/>
        <dbReference type="ChEBI" id="CHEBI:29985"/>
        <dbReference type="ChEBI" id="CHEBI:30616"/>
        <dbReference type="ChEBI" id="CHEBI:43474"/>
        <dbReference type="ChEBI" id="CHEBI:58359"/>
        <dbReference type="ChEBI" id="CHEBI:78520"/>
        <dbReference type="ChEBI" id="CHEBI:78521"/>
        <dbReference type="ChEBI" id="CHEBI:456216"/>
    </reaction>
</comment>
<comment type="catalytic activity">
    <reaction evidence="1">
        <text>L-aspartyl-tRNA(Asn) + L-glutamine + ATP + H2O = L-asparaginyl-tRNA(Asn) + L-glutamate + ADP + phosphate + 2 H(+)</text>
        <dbReference type="Rhea" id="RHEA:14513"/>
        <dbReference type="Rhea" id="RHEA-COMP:9674"/>
        <dbReference type="Rhea" id="RHEA-COMP:9677"/>
        <dbReference type="ChEBI" id="CHEBI:15377"/>
        <dbReference type="ChEBI" id="CHEBI:15378"/>
        <dbReference type="ChEBI" id="CHEBI:29985"/>
        <dbReference type="ChEBI" id="CHEBI:30616"/>
        <dbReference type="ChEBI" id="CHEBI:43474"/>
        <dbReference type="ChEBI" id="CHEBI:58359"/>
        <dbReference type="ChEBI" id="CHEBI:78515"/>
        <dbReference type="ChEBI" id="CHEBI:78516"/>
        <dbReference type="ChEBI" id="CHEBI:456216"/>
    </reaction>
</comment>
<comment type="subunit">
    <text evidence="1">Heterotrimer of A, B and C subunits.</text>
</comment>
<comment type="similarity">
    <text evidence="1">Belongs to the GatC family.</text>
</comment>
<feature type="chain" id="PRO_1000095320" description="Aspartyl/glutamyl-tRNA(Asn/Gln) amidotransferase subunit C">
    <location>
        <begin position="1"/>
        <end position="97"/>
    </location>
</feature>
<protein>
    <recommendedName>
        <fullName evidence="1">Aspartyl/glutamyl-tRNA(Asn/Gln) amidotransferase subunit C</fullName>
        <shortName evidence="1">Asp/Glu-ADT subunit C</shortName>
        <ecNumber evidence="1">6.3.5.-</ecNumber>
    </recommendedName>
</protein>
<reference key="1">
    <citation type="submission" date="2008-02" db="EMBL/GenBank/DDBJ databases">
        <title>Complete sequence of Synechococcus sp. PCC 7002.</title>
        <authorList>
            <person name="Li T."/>
            <person name="Zhao J."/>
            <person name="Zhao C."/>
            <person name="Liu Z."/>
            <person name="Zhao F."/>
            <person name="Marquardt J."/>
            <person name="Nomura C.T."/>
            <person name="Persson S."/>
            <person name="Detter J.C."/>
            <person name="Richardson P.M."/>
            <person name="Lanz C."/>
            <person name="Schuster S.C."/>
            <person name="Wang J."/>
            <person name="Li S."/>
            <person name="Huang X."/>
            <person name="Cai T."/>
            <person name="Yu Z."/>
            <person name="Luo J."/>
            <person name="Zhao J."/>
            <person name="Bryant D.A."/>
        </authorList>
    </citation>
    <scope>NUCLEOTIDE SEQUENCE [LARGE SCALE GENOMIC DNA]</scope>
    <source>
        <strain>ATCC 27264 / PCC 7002 / PR-6</strain>
    </source>
</reference>
<sequence>MIDLEQVRKVAHLARLELTPEEEQRLPSQLSAILDYVEQLSELDTDNVEPTTRAIDVSNITRTDEQKTFGDCQLLLDNAPDREDDYFRVPKILGESE</sequence>
<name>GATC_PICP2</name>
<organism>
    <name type="scientific">Picosynechococcus sp. (strain ATCC 27264 / PCC 7002 / PR-6)</name>
    <name type="common">Agmenellum quadruplicatum</name>
    <dbReference type="NCBI Taxonomy" id="32049"/>
    <lineage>
        <taxon>Bacteria</taxon>
        <taxon>Bacillati</taxon>
        <taxon>Cyanobacteriota</taxon>
        <taxon>Cyanophyceae</taxon>
        <taxon>Oscillatoriophycideae</taxon>
        <taxon>Chroococcales</taxon>
        <taxon>Geminocystaceae</taxon>
        <taxon>Picosynechococcus</taxon>
    </lineage>
</organism>
<keyword id="KW-0067">ATP-binding</keyword>
<keyword id="KW-0436">Ligase</keyword>
<keyword id="KW-0547">Nucleotide-binding</keyword>
<keyword id="KW-0648">Protein biosynthesis</keyword>
<keyword id="KW-1185">Reference proteome</keyword>
<accession>B1XNN1</accession>